<accession>B9LPH6</accession>
<reference key="1">
    <citation type="journal article" date="2016" name="Stand. Genomic Sci.">
        <title>Complete genome sequence of the Antarctic Halorubrum lacusprofundi type strain ACAM 34.</title>
        <authorList>
            <person name="Anderson I.J."/>
            <person name="DasSarma P."/>
            <person name="Lucas S."/>
            <person name="Copeland A."/>
            <person name="Lapidus A."/>
            <person name="Del Rio T.G."/>
            <person name="Tice H."/>
            <person name="Dalin E."/>
            <person name="Bruce D.C."/>
            <person name="Goodwin L."/>
            <person name="Pitluck S."/>
            <person name="Sims D."/>
            <person name="Brettin T.S."/>
            <person name="Detter J.C."/>
            <person name="Han C.S."/>
            <person name="Larimer F."/>
            <person name="Hauser L."/>
            <person name="Land M."/>
            <person name="Ivanova N."/>
            <person name="Richardson P."/>
            <person name="Cavicchioli R."/>
            <person name="DasSarma S."/>
            <person name="Woese C.R."/>
            <person name="Kyrpides N.C."/>
        </authorList>
    </citation>
    <scope>NUCLEOTIDE SEQUENCE [LARGE SCALE GENOMIC DNA]</scope>
    <source>
        <strain>ATCC 49239 / DSM 5036 / JCM 8891 / ACAM 34</strain>
    </source>
</reference>
<keyword id="KW-0342">GTP-binding</keyword>
<keyword id="KW-0436">Ligase</keyword>
<keyword id="KW-0460">Magnesium</keyword>
<keyword id="KW-0464">Manganese</keyword>
<keyword id="KW-0479">Metal-binding</keyword>
<keyword id="KW-0547">Nucleotide-binding</keyword>
<keyword id="KW-0630">Potassium</keyword>
<keyword id="KW-1185">Reference proteome</keyword>
<sequence>MELFAVPGLPEIRDGDDLAAMIDERVDLREGDVVVVASTVVSKAEGRTFDLSDFPASERAEAVADRLAEIAGEEKDPRFAQAVIEESTELIMEAPFLLTATRFGHIGVNAGIDQSNVPDGDLLLLPERPSESAARIREGIAADRVVVSDTCGRPFRHGQRGVAIGWAGLPASRDWRGERDRDGREMGVTVQNVIDELASAANLVAGEGDGGTPVVVVRDWEFGDHDGSDNHFREVEGDFVRQALRQWTFDD</sequence>
<gene>
    <name evidence="1" type="primary">cofE</name>
    <name type="ordered locus">Hlac_1679</name>
</gene>
<comment type="function">
    <text evidence="1">Catalyzes the GTP-dependent successive addition of two or more gamma-linked L-glutamates to the L-lactyl phosphodiester of 7,8-didemethyl-8-hydroxy-5-deazariboflavin (F420-0) to form coenzyme F420-0-glutamyl-glutamate (F420-2) or polyglutamated F420 derivatives.</text>
</comment>
<comment type="catalytic activity">
    <reaction evidence="1">
        <text>oxidized coenzyme F420-0 + GTP + L-glutamate = oxidized coenzyme F420-1 + GDP + phosphate + H(+)</text>
        <dbReference type="Rhea" id="RHEA:30555"/>
        <dbReference type="ChEBI" id="CHEBI:15378"/>
        <dbReference type="ChEBI" id="CHEBI:29985"/>
        <dbReference type="ChEBI" id="CHEBI:37565"/>
        <dbReference type="ChEBI" id="CHEBI:43474"/>
        <dbReference type="ChEBI" id="CHEBI:58189"/>
        <dbReference type="ChEBI" id="CHEBI:59907"/>
        <dbReference type="ChEBI" id="CHEBI:59920"/>
        <dbReference type="EC" id="6.3.2.31"/>
    </reaction>
</comment>
<comment type="catalytic activity">
    <reaction evidence="1">
        <text>oxidized coenzyme F420-1 + GTP + L-glutamate = oxidized coenzyme F420-2 + GDP + phosphate + H(+)</text>
        <dbReference type="Rhea" id="RHEA:30523"/>
        <dbReference type="ChEBI" id="CHEBI:15378"/>
        <dbReference type="ChEBI" id="CHEBI:29985"/>
        <dbReference type="ChEBI" id="CHEBI:37565"/>
        <dbReference type="ChEBI" id="CHEBI:43474"/>
        <dbReference type="ChEBI" id="CHEBI:57922"/>
        <dbReference type="ChEBI" id="CHEBI:58189"/>
        <dbReference type="ChEBI" id="CHEBI:59920"/>
        <dbReference type="EC" id="6.3.2.34"/>
    </reaction>
</comment>
<comment type="cofactor">
    <cofactor evidence="1">
        <name>Mg(2+)</name>
        <dbReference type="ChEBI" id="CHEBI:18420"/>
    </cofactor>
    <cofactor evidence="1">
        <name>Mn(2+)</name>
        <dbReference type="ChEBI" id="CHEBI:29035"/>
    </cofactor>
    <text evidence="1">Binds 2 divalent metal cations per subunit. The ions could be magnesium and/or manganese.</text>
</comment>
<comment type="cofactor">
    <cofactor evidence="1">
        <name>K(+)</name>
        <dbReference type="ChEBI" id="CHEBI:29103"/>
    </cofactor>
    <text evidence="1">Monovalent cation. The ion could be potassium.</text>
</comment>
<comment type="pathway">
    <text evidence="1">Cofactor biosynthesis; coenzyme F420 biosynthesis.</text>
</comment>
<comment type="subunit">
    <text evidence="1">Homodimer.</text>
</comment>
<comment type="similarity">
    <text evidence="1">Belongs to the CofE family.</text>
</comment>
<evidence type="ECO:0000255" key="1">
    <source>
        <dbReference type="HAMAP-Rule" id="MF_01258"/>
    </source>
</evidence>
<dbReference type="EC" id="6.3.2.31" evidence="1"/>
<dbReference type="EC" id="6.3.2.34" evidence="1"/>
<dbReference type="EMBL" id="CP001365">
    <property type="protein sequence ID" value="ACM57264.1"/>
    <property type="molecule type" value="Genomic_DNA"/>
</dbReference>
<dbReference type="RefSeq" id="WP_015910402.1">
    <property type="nucleotide sequence ID" value="NC_012029.1"/>
</dbReference>
<dbReference type="SMR" id="B9LPH6"/>
<dbReference type="GeneID" id="7400436"/>
<dbReference type="KEGG" id="hla:Hlac_1679"/>
<dbReference type="eggNOG" id="arCOG02714">
    <property type="taxonomic scope" value="Archaea"/>
</dbReference>
<dbReference type="HOGENOM" id="CLU_051152_1_1_2"/>
<dbReference type="UniPathway" id="UPA00071"/>
<dbReference type="Proteomes" id="UP000000740">
    <property type="component" value="Chromosome 1"/>
</dbReference>
<dbReference type="GO" id="GO:0052618">
    <property type="term" value="F:coenzyme F420-0:L-glutamate ligase activity"/>
    <property type="evidence" value="ECO:0007669"/>
    <property type="project" value="UniProtKB-UniRule"/>
</dbReference>
<dbReference type="GO" id="GO:0052619">
    <property type="term" value="F:coenzyme F420-1:gamma-L-glutamate ligase activity"/>
    <property type="evidence" value="ECO:0007669"/>
    <property type="project" value="UniProtKB-UniRule"/>
</dbReference>
<dbReference type="GO" id="GO:0005525">
    <property type="term" value="F:GTP binding"/>
    <property type="evidence" value="ECO:0007669"/>
    <property type="project" value="UniProtKB-KW"/>
</dbReference>
<dbReference type="GO" id="GO:0046872">
    <property type="term" value="F:metal ion binding"/>
    <property type="evidence" value="ECO:0007669"/>
    <property type="project" value="UniProtKB-KW"/>
</dbReference>
<dbReference type="GO" id="GO:0052645">
    <property type="term" value="P:F420-0 metabolic process"/>
    <property type="evidence" value="ECO:0007669"/>
    <property type="project" value="UniProtKB-UniRule"/>
</dbReference>
<dbReference type="Gene3D" id="3.30.1330.100">
    <property type="entry name" value="CofE-like"/>
    <property type="match status" value="1"/>
</dbReference>
<dbReference type="Gene3D" id="3.90.1660.10">
    <property type="entry name" value="CofE-like domain"/>
    <property type="match status" value="1"/>
</dbReference>
<dbReference type="HAMAP" id="MF_01258">
    <property type="entry name" value="F420_ligase_CofE"/>
    <property type="match status" value="1"/>
</dbReference>
<dbReference type="InterPro" id="IPR008225">
    <property type="entry name" value="F420-0_g-glutamyl_ligase"/>
</dbReference>
<dbReference type="InterPro" id="IPR002847">
    <property type="entry name" value="F420-0_gamma-glut_ligase-dom"/>
</dbReference>
<dbReference type="InterPro" id="IPR023659">
    <property type="entry name" value="F420_ligase_CofE_arc"/>
</dbReference>
<dbReference type="NCBIfam" id="TIGR01916">
    <property type="entry name" value="F420_cofE"/>
    <property type="match status" value="1"/>
</dbReference>
<dbReference type="NCBIfam" id="NF009809">
    <property type="entry name" value="PRK13293.1"/>
    <property type="match status" value="1"/>
</dbReference>
<dbReference type="PANTHER" id="PTHR47917">
    <property type="match status" value="1"/>
</dbReference>
<dbReference type="PANTHER" id="PTHR47917:SF1">
    <property type="entry name" value="COENZYME F420:L-GLUTAMATE LIGASE"/>
    <property type="match status" value="1"/>
</dbReference>
<dbReference type="Pfam" id="PF01996">
    <property type="entry name" value="F420_ligase"/>
    <property type="match status" value="1"/>
</dbReference>
<dbReference type="SUPFAM" id="SSF144010">
    <property type="entry name" value="CofE-like"/>
    <property type="match status" value="1"/>
</dbReference>
<feature type="chain" id="PRO_1000165111" description="Coenzyme F420:L-glutamate ligase">
    <location>
        <begin position="1"/>
        <end position="251"/>
    </location>
</feature>
<feature type="binding site" evidence="1">
    <location>
        <begin position="9"/>
        <end position="12"/>
    </location>
    <ligand>
        <name>GTP</name>
        <dbReference type="ChEBI" id="CHEBI:37565"/>
    </ligand>
</feature>
<feature type="binding site" evidence="1">
    <location>
        <begin position="38"/>
        <end position="39"/>
    </location>
    <ligand>
        <name>GTP</name>
        <dbReference type="ChEBI" id="CHEBI:37565"/>
    </ligand>
</feature>
<feature type="binding site" evidence="1">
    <location>
        <position position="43"/>
    </location>
    <ligand>
        <name>GTP</name>
        <dbReference type="ChEBI" id="CHEBI:37565"/>
    </ligand>
</feature>
<feature type="binding site" evidence="1">
    <location>
        <position position="113"/>
    </location>
    <ligand>
        <name>a divalent metal cation</name>
        <dbReference type="ChEBI" id="CHEBI:60240"/>
        <label>1</label>
    </ligand>
</feature>
<feature type="binding site" evidence="1">
    <location>
        <position position="116"/>
    </location>
    <ligand>
        <name>GTP</name>
        <dbReference type="ChEBI" id="CHEBI:37565"/>
    </ligand>
</feature>
<feature type="binding site" evidence="1">
    <location>
        <position position="149"/>
    </location>
    <ligand>
        <name>a divalent metal cation</name>
        <dbReference type="ChEBI" id="CHEBI:60240"/>
        <label>1</label>
    </ligand>
</feature>
<feature type="binding site" evidence="1">
    <location>
        <position position="150"/>
    </location>
    <ligand>
        <name>a divalent metal cation</name>
        <dbReference type="ChEBI" id="CHEBI:60240"/>
        <label>2</label>
    </ligand>
</feature>
<feature type="binding site" evidence="1">
    <location>
        <begin position="205"/>
        <end position="212"/>
    </location>
    <ligand>
        <name>GTP</name>
        <dbReference type="ChEBI" id="CHEBI:37565"/>
    </ligand>
</feature>
<feature type="binding site" evidence="1">
    <location>
        <position position="207"/>
    </location>
    <ligand>
        <name>a divalent metal cation</name>
        <dbReference type="ChEBI" id="CHEBI:60240"/>
        <label>2</label>
    </ligand>
</feature>
<proteinExistence type="inferred from homology"/>
<organism>
    <name type="scientific">Halorubrum lacusprofundi (strain ATCC 49239 / DSM 5036 / JCM 8891 / ACAM 34)</name>
    <dbReference type="NCBI Taxonomy" id="416348"/>
    <lineage>
        <taxon>Archaea</taxon>
        <taxon>Methanobacteriati</taxon>
        <taxon>Methanobacteriota</taxon>
        <taxon>Stenosarchaea group</taxon>
        <taxon>Halobacteria</taxon>
        <taxon>Halobacteriales</taxon>
        <taxon>Haloferacaceae</taxon>
        <taxon>Halorubrum</taxon>
    </lineage>
</organism>
<protein>
    <recommendedName>
        <fullName evidence="1">Coenzyme F420:L-glutamate ligase</fullName>
        <ecNumber evidence="1">6.3.2.31</ecNumber>
        <ecNumber evidence="1">6.3.2.34</ecNumber>
    </recommendedName>
    <alternativeName>
        <fullName evidence="1">Coenzyme F420-0:L-glutamate ligase</fullName>
    </alternativeName>
    <alternativeName>
        <fullName evidence="1">Coenzyme F420-1:gamma-L-glutamate ligase</fullName>
    </alternativeName>
</protein>
<name>COFE_HALLT</name>